<dbReference type="EC" id="3.4.24.-" evidence="2"/>
<dbReference type="EMBL" id="CR857947">
    <property type="protein sequence ID" value="CAH90194.1"/>
    <property type="molecule type" value="mRNA"/>
</dbReference>
<dbReference type="RefSeq" id="NP_001128771.1">
    <property type="nucleotide sequence ID" value="NM_001135299.1"/>
</dbReference>
<dbReference type="SMR" id="Q5RDG3"/>
<dbReference type="FunCoup" id="Q5RDG3">
    <property type="interactions" value="2578"/>
</dbReference>
<dbReference type="STRING" id="9601.ENSPPYP00000002367"/>
<dbReference type="GeneID" id="100189669"/>
<dbReference type="KEGG" id="pon:100189669"/>
<dbReference type="CTD" id="10531"/>
<dbReference type="eggNOG" id="KOG2019">
    <property type="taxonomic scope" value="Eukaryota"/>
</dbReference>
<dbReference type="InParanoid" id="Q5RDG3"/>
<dbReference type="OrthoDB" id="10250783at2759"/>
<dbReference type="Proteomes" id="UP000001595">
    <property type="component" value="Unplaced"/>
</dbReference>
<dbReference type="GO" id="GO:0005759">
    <property type="term" value="C:mitochondrial matrix"/>
    <property type="evidence" value="ECO:0000250"/>
    <property type="project" value="UniProtKB"/>
</dbReference>
<dbReference type="GO" id="GO:0046872">
    <property type="term" value="F:metal ion binding"/>
    <property type="evidence" value="ECO:0007669"/>
    <property type="project" value="UniProtKB-KW"/>
</dbReference>
<dbReference type="GO" id="GO:0004222">
    <property type="term" value="F:metalloendopeptidase activity"/>
    <property type="evidence" value="ECO:0000250"/>
    <property type="project" value="UniProtKB"/>
</dbReference>
<dbReference type="GO" id="GO:0016485">
    <property type="term" value="P:protein processing"/>
    <property type="evidence" value="ECO:0007669"/>
    <property type="project" value="TreeGrafter"/>
</dbReference>
<dbReference type="GO" id="GO:0006508">
    <property type="term" value="P:proteolysis"/>
    <property type="evidence" value="ECO:0000250"/>
    <property type="project" value="UniProtKB"/>
</dbReference>
<dbReference type="FunFam" id="3.30.830.10:FF:000013">
    <property type="entry name" value="Mitochondrial presequence protease"/>
    <property type="match status" value="1"/>
</dbReference>
<dbReference type="FunFam" id="3.30.830.10:FF:000020">
    <property type="entry name" value="Mitochondrial presequence protease"/>
    <property type="match status" value="1"/>
</dbReference>
<dbReference type="FunFam" id="3.30.830.10:FF:000009">
    <property type="entry name" value="Presequence protease, mitochondrial"/>
    <property type="match status" value="1"/>
</dbReference>
<dbReference type="FunFam" id="3.30.830.10:FF:000011">
    <property type="entry name" value="Presequence protease, mitochondrial"/>
    <property type="match status" value="1"/>
</dbReference>
<dbReference type="Gene3D" id="3.30.830.10">
    <property type="entry name" value="Metalloenzyme, LuxS/M16 peptidase-like"/>
    <property type="match status" value="4"/>
</dbReference>
<dbReference type="InterPro" id="IPR011249">
    <property type="entry name" value="Metalloenz_LuxS/M16"/>
</dbReference>
<dbReference type="InterPro" id="IPR011765">
    <property type="entry name" value="Pept_M16_N"/>
</dbReference>
<dbReference type="InterPro" id="IPR007863">
    <property type="entry name" value="Peptidase_M16_C"/>
</dbReference>
<dbReference type="InterPro" id="IPR013578">
    <property type="entry name" value="Peptidase_M16C_assoc"/>
</dbReference>
<dbReference type="InterPro" id="IPR055130">
    <property type="entry name" value="PreP_C"/>
</dbReference>
<dbReference type="PANTHER" id="PTHR43016">
    <property type="entry name" value="PRESEQUENCE PROTEASE"/>
    <property type="match status" value="1"/>
</dbReference>
<dbReference type="PANTHER" id="PTHR43016:SF13">
    <property type="entry name" value="PRESEQUENCE PROTEASE, MITOCHONDRIAL"/>
    <property type="match status" value="1"/>
</dbReference>
<dbReference type="Pfam" id="PF08367">
    <property type="entry name" value="M16C_assoc"/>
    <property type="match status" value="1"/>
</dbReference>
<dbReference type="Pfam" id="PF00675">
    <property type="entry name" value="Peptidase_M16"/>
    <property type="match status" value="1"/>
</dbReference>
<dbReference type="Pfam" id="PF05193">
    <property type="entry name" value="Peptidase_M16_C"/>
    <property type="match status" value="1"/>
</dbReference>
<dbReference type="Pfam" id="PF22516">
    <property type="entry name" value="PreP_C"/>
    <property type="match status" value="1"/>
</dbReference>
<dbReference type="SMART" id="SM01264">
    <property type="entry name" value="M16C_associated"/>
    <property type="match status" value="1"/>
</dbReference>
<dbReference type="SUPFAM" id="SSF63411">
    <property type="entry name" value="LuxS/MPP-like metallohydrolase"/>
    <property type="match status" value="4"/>
</dbReference>
<accession>Q5RDG3</accession>
<reference key="1">
    <citation type="submission" date="2004-11" db="EMBL/GenBank/DDBJ databases">
        <authorList>
            <consortium name="The German cDNA consortium"/>
        </authorList>
    </citation>
    <scope>NUCLEOTIDE SEQUENCE [LARGE SCALE MRNA]</scope>
    <source>
        <tissue>Heart</tissue>
    </source>
</reference>
<organism>
    <name type="scientific">Pongo abelii</name>
    <name type="common">Sumatran orangutan</name>
    <name type="synonym">Pongo pygmaeus abelii</name>
    <dbReference type="NCBI Taxonomy" id="9601"/>
    <lineage>
        <taxon>Eukaryota</taxon>
        <taxon>Metazoa</taxon>
        <taxon>Chordata</taxon>
        <taxon>Craniata</taxon>
        <taxon>Vertebrata</taxon>
        <taxon>Euteleostomi</taxon>
        <taxon>Mammalia</taxon>
        <taxon>Eutheria</taxon>
        <taxon>Euarchontoglires</taxon>
        <taxon>Primates</taxon>
        <taxon>Haplorrhini</taxon>
        <taxon>Catarrhini</taxon>
        <taxon>Hominidae</taxon>
        <taxon>Pongo</taxon>
    </lineage>
</organism>
<comment type="function">
    <text evidence="2">Metalloendopeptidase of the mitochondrial matrix that functions in peptide cleavage and degradation rather than in protein processing. Has an ATP-independent activity. Specifically cleaves peptides in the range of 5 to 65 residues. Shows a preference for cleavage after small polar residues and before basic residues, but without any positional preference. Degrades the transit peptides of mitochondrial proteins after their cleavage. Also degrades other unstructured peptides. It is also able to degrade amyloid-beta protein 40, one of the peptides produced by APP processing, when it accumulates in mitochondrion. It is a highly efficient protease, at least toward amyloid-beta protein 40. Cleaves that peptide at a specific position and is probably not processive, releasing digested peptides intermediates that can be further cleaved subsequently. It is also able to degrade amyloid-beta protein 42.</text>
</comment>
<comment type="cofactor">
    <cofactor evidence="2">
        <name>Zn(2+)</name>
        <dbReference type="ChEBI" id="CHEBI:29105"/>
    </cofactor>
    <text evidence="2">Binds 1 zinc ion per subunit.</text>
</comment>
<comment type="activity regulation">
    <text evidence="2">Mainly exists in a closed and catalytically competent conformation but a closed-to-open switch allows substrate entry into the catalytic chamber. Substrate binding induces closure and dimerization. A disulfide bond may lock the enzyme in a closed conformation preventing substrate entry into the catalytic chamber, participating in redox regulation of the enzyme. Inhibited by metal-chelating agents. Inhibited by nickel and zinc excess, and slightly activated by manganese.</text>
</comment>
<comment type="subunit">
    <text evidence="2">Monomer and homodimer; homodimerization is induced by binding of the substrate.</text>
</comment>
<comment type="subcellular location">
    <subcellularLocation>
        <location evidence="2">Mitochondrion matrix</location>
    </subcellularLocation>
</comment>
<comment type="PTM">
    <text evidence="2">A disulfide bond locks the enzyme in the closed conformation preventing substrate entry into the catalytic chamber.</text>
</comment>
<comment type="similarity">
    <text evidence="5">Belongs to the peptidase M16 family. PreP subfamily.</text>
</comment>
<protein>
    <recommendedName>
        <fullName evidence="5">Presequence protease, mitochondrial</fullName>
        <ecNumber evidence="2">3.4.24.-</ecNumber>
    </recommendedName>
    <alternativeName>
        <fullName evidence="2">Pitrilysin metalloproteinase 1</fullName>
    </alternativeName>
</protein>
<sequence length="1037" mass="117507">MWRCGGRQGLGVLRRLSGGHAHHRAWRWNSNRACERALQYKLGDKIHGFTVNQVTSVPELFLTAVKLIHDDTGARYLHLAREDTNNLFSVQFRTTPMDSTGVPHILEHTVLCGSQKYPCRDPFFRMLNRSLSTFMNAFTASDYTLYPFSTQNPKDFQNLLSVYLDATFFPCLRELDFWQEGWRLEHENPRDPQTALVFKGVVFNEMKGAFTDNERIFSQHLQNRLLPDHTYSVVSGGDPLCILELTWEQLKQFHATHYHPSNARFFTYGNFPLEQHLKQIHEEALSKFQKIEPSTAVPAQTPWDKPREFQITCGPDSFATDPSKQTTVSVSFLLPDITDTFEAFTLSLLSSLLTSGPNSPFYKALIESGLGTDFSPDVGYNGYTREAYFSVGLQGIAEKDIETVRSLVDRTIDEVVEKGFEDDRIEALLHKIEIQMKHQSTSFGLMLTSYIASCWNHDGDPVELLKLGNQLAKFRQCLQENPKFLQEKVKQYFKNNQHKLTLSMRPDDKYHEKQAQVEATKLKQKVEALSPGDRQQIYEKGLELRTQQSKPQDASCLPALKVSDIEPTIPVTELDVVLTAGDIPVQYCAQPTNGMVYFRAFSSLNTLPEELRPYVPLFCSVLTKLGCGLLDYREQAQQIELKTGGMSASPHVLPDDSHMDTYEQGVLFSSLCLDRNLPDMMHLWSEIFNNPCFEEEEHFKVLVKMTAQELTNAIPDSGHLYASIRAGRTLTPAGDLQETFSGMDRVRLMKRIAEMTDIKPILRKLPRIKKHLLNGDNMRCSVNATPQQMSQTEKAVEDFLRSIGRSKKERRPVRPHTVEKPVPSSSGGDAHVPHGSQIIRKLVTEPTFKPWQMKTHFLMPFPVNYVGECIRTVPYMDPDHASLKILARLMTAKFLHTEIREKGGAYGGGAKLSHNGIFSLYSYRDPNTIETLQSFGKAVDWAKSGKFTQQDIDEAKLSVFSTVDAPIAPSNKGMDYFLYGLSDGMKQAHREQLFAVSHDKLLAVSNRYLGTGKSTHSLAILGPENPKIAKDPSWTIR</sequence>
<proteinExistence type="evidence at transcript level"/>
<name>PREP_PONAB</name>
<keyword id="KW-0007">Acetylation</keyword>
<keyword id="KW-1015">Disulfide bond</keyword>
<keyword id="KW-0378">Hydrolase</keyword>
<keyword id="KW-0479">Metal-binding</keyword>
<keyword id="KW-0482">Metalloprotease</keyword>
<keyword id="KW-0496">Mitochondrion</keyword>
<keyword id="KW-0645">Protease</keyword>
<keyword id="KW-1185">Reference proteome</keyword>
<keyword id="KW-0809">Transit peptide</keyword>
<keyword id="KW-0862">Zinc</keyword>
<gene>
    <name evidence="2" type="primary">PITRM1</name>
</gene>
<evidence type="ECO:0000250" key="1"/>
<evidence type="ECO:0000250" key="2">
    <source>
        <dbReference type="UniProtKB" id="Q5JRX3"/>
    </source>
</evidence>
<evidence type="ECO:0000250" key="3">
    <source>
        <dbReference type="UniProtKB" id="Q8K411"/>
    </source>
</evidence>
<evidence type="ECO:0000256" key="4">
    <source>
        <dbReference type="SAM" id="MobiDB-lite"/>
    </source>
</evidence>
<evidence type="ECO:0000305" key="5"/>
<feature type="transit peptide" description="Mitochondrion" evidence="1">
    <location>
        <begin position="1"/>
        <end position="15"/>
    </location>
</feature>
<feature type="chain" id="PRO_0000249933" description="Presequence protease, mitochondrial">
    <location>
        <begin position="16"/>
        <end position="1037"/>
    </location>
</feature>
<feature type="region of interest" description="Disordered" evidence="4">
    <location>
        <begin position="803"/>
        <end position="834"/>
    </location>
</feature>
<feature type="compositionally biased region" description="Basic residues" evidence="4">
    <location>
        <begin position="804"/>
        <end position="814"/>
    </location>
</feature>
<feature type="active site" description="Proton acceptor" evidence="2">
    <location>
        <position position="107"/>
    </location>
</feature>
<feature type="binding site" evidence="2">
    <location>
        <position position="104"/>
    </location>
    <ligand>
        <name>Zn(2+)</name>
        <dbReference type="ChEBI" id="CHEBI:29105"/>
        <note>catalytic</note>
    </ligand>
</feature>
<feature type="binding site" evidence="2">
    <location>
        <position position="108"/>
    </location>
    <ligand>
        <name>Zn(2+)</name>
        <dbReference type="ChEBI" id="CHEBI:29105"/>
        <note>catalytic</note>
    </ligand>
</feature>
<feature type="binding site" evidence="2">
    <location>
        <position position="205"/>
    </location>
    <ligand>
        <name>Zn(2+)</name>
        <dbReference type="ChEBI" id="CHEBI:29105"/>
        <note>catalytic</note>
    </ligand>
</feature>
<feature type="modified residue" description="N6-acetyllysine" evidence="3">
    <location>
        <position position="759"/>
    </location>
</feature>
<feature type="modified residue" description="N6-acetyllysine; alternate" evidence="3">
    <location>
        <position position="770"/>
    </location>
</feature>
<feature type="modified residue" description="N6-succinyllysine; alternate" evidence="3">
    <location>
        <position position="770"/>
    </location>
</feature>
<feature type="modified residue" description="N6-succinyllysine" evidence="3">
    <location>
        <position position="849"/>
    </location>
</feature>
<feature type="modified residue" description="N6-acetyllysine" evidence="3">
    <location>
        <position position="884"/>
    </location>
</feature>
<feature type="modified residue" description="N6-succinyllysine" evidence="3">
    <location>
        <position position="946"/>
    </location>
</feature>
<feature type="disulfide bond" evidence="2">
    <location>
        <begin position="119"/>
        <end position="556"/>
    </location>
</feature>